<sequence length="196" mass="21090">MQERIKACFTESIQTQIAAAEALPDAISRAAMTLVQSLLNGNKILCCGNGTSAANAQHFAASMINRFETERPSLPAIALNTDNVVLTAIANDRLHDEVYAKQVRALGHAGDVLLAISTRGNSRDIVKAVEAAVTRDMTIVALTGYDGGELAGLLGPQDVEIRIPSHRSARIQEMHMLTVNCLCDLIDNTLFPHQDV</sequence>
<keyword id="KW-0235">DNA replication</keyword>
<proteinExistence type="inferred from homology"/>
<accession>B7N0T4</accession>
<reference key="1">
    <citation type="journal article" date="2009" name="PLoS Genet.">
        <title>Organised genome dynamics in the Escherichia coli species results in highly diverse adaptive paths.</title>
        <authorList>
            <person name="Touchon M."/>
            <person name="Hoede C."/>
            <person name="Tenaillon O."/>
            <person name="Barbe V."/>
            <person name="Baeriswyl S."/>
            <person name="Bidet P."/>
            <person name="Bingen E."/>
            <person name="Bonacorsi S."/>
            <person name="Bouchier C."/>
            <person name="Bouvet O."/>
            <person name="Calteau A."/>
            <person name="Chiapello H."/>
            <person name="Clermont O."/>
            <person name="Cruveiller S."/>
            <person name="Danchin A."/>
            <person name="Diard M."/>
            <person name="Dossat C."/>
            <person name="Karoui M.E."/>
            <person name="Frapy E."/>
            <person name="Garry L."/>
            <person name="Ghigo J.M."/>
            <person name="Gilles A.M."/>
            <person name="Johnson J."/>
            <person name="Le Bouguenec C."/>
            <person name="Lescat M."/>
            <person name="Mangenot S."/>
            <person name="Martinez-Jehanne V."/>
            <person name="Matic I."/>
            <person name="Nassif X."/>
            <person name="Oztas S."/>
            <person name="Petit M.A."/>
            <person name="Pichon C."/>
            <person name="Rouy Z."/>
            <person name="Ruf C.S."/>
            <person name="Schneider D."/>
            <person name="Tourret J."/>
            <person name="Vacherie B."/>
            <person name="Vallenet D."/>
            <person name="Medigue C."/>
            <person name="Rocha E.P.C."/>
            <person name="Denamur E."/>
        </authorList>
    </citation>
    <scope>NUCLEOTIDE SEQUENCE [LARGE SCALE GENOMIC DNA]</scope>
    <source>
        <strain>ED1a</strain>
    </source>
</reference>
<comment type="function">
    <text evidence="1">Required for the timely initiation of chromosomal replication via direct interactions with the DnaA initiator protein.</text>
</comment>
<comment type="subunit">
    <text evidence="1">Homotetramer; dimer of dimers.</text>
</comment>
<comment type="similarity">
    <text evidence="1">Belongs to the SIS family. DiaA subfamily.</text>
</comment>
<gene>
    <name evidence="1" type="primary">diaA</name>
    <name type="ordered locus">ECED1_3809</name>
</gene>
<feature type="chain" id="PRO_1000164295" description="DnaA initiator-associating protein DiaA">
    <location>
        <begin position="1"/>
        <end position="196"/>
    </location>
</feature>
<feature type="domain" description="SIS" evidence="1">
    <location>
        <begin position="34"/>
        <end position="196"/>
    </location>
</feature>
<evidence type="ECO:0000255" key="1">
    <source>
        <dbReference type="HAMAP-Rule" id="MF_01157"/>
    </source>
</evidence>
<dbReference type="EMBL" id="CU928162">
    <property type="protein sequence ID" value="CAR09952.2"/>
    <property type="molecule type" value="Genomic_DNA"/>
</dbReference>
<dbReference type="RefSeq" id="WP_001158035.1">
    <property type="nucleotide sequence ID" value="NC_011745.1"/>
</dbReference>
<dbReference type="SMR" id="B7N0T4"/>
<dbReference type="GeneID" id="75206004"/>
<dbReference type="KEGG" id="ecq:ECED1_3809"/>
<dbReference type="HOGENOM" id="CLU_080999_3_1_6"/>
<dbReference type="Proteomes" id="UP000000748">
    <property type="component" value="Chromosome"/>
</dbReference>
<dbReference type="GO" id="GO:0097367">
    <property type="term" value="F:carbohydrate derivative binding"/>
    <property type="evidence" value="ECO:0007669"/>
    <property type="project" value="InterPro"/>
</dbReference>
<dbReference type="GO" id="GO:1901135">
    <property type="term" value="P:carbohydrate derivative metabolic process"/>
    <property type="evidence" value="ECO:0007669"/>
    <property type="project" value="InterPro"/>
</dbReference>
<dbReference type="GO" id="GO:0006260">
    <property type="term" value="P:DNA replication"/>
    <property type="evidence" value="ECO:0007669"/>
    <property type="project" value="UniProtKB-UniRule"/>
</dbReference>
<dbReference type="CDD" id="cd05006">
    <property type="entry name" value="SIS_GmhA"/>
    <property type="match status" value="1"/>
</dbReference>
<dbReference type="FunFam" id="3.40.50.10490:FF:000006">
    <property type="entry name" value="DnaA initiator-associating protein DiaA"/>
    <property type="match status" value="1"/>
</dbReference>
<dbReference type="Gene3D" id="3.40.50.10490">
    <property type="entry name" value="Glucose-6-phosphate isomerase like protein, domain 1"/>
    <property type="match status" value="1"/>
</dbReference>
<dbReference type="HAMAP" id="MF_01157">
    <property type="entry name" value="SIS_DiaA"/>
    <property type="match status" value="1"/>
</dbReference>
<dbReference type="InterPro" id="IPR023070">
    <property type="entry name" value="DiaA"/>
</dbReference>
<dbReference type="InterPro" id="IPR035461">
    <property type="entry name" value="GmhA/DiaA"/>
</dbReference>
<dbReference type="InterPro" id="IPR001347">
    <property type="entry name" value="SIS_dom"/>
</dbReference>
<dbReference type="InterPro" id="IPR046348">
    <property type="entry name" value="SIS_dom_sf"/>
</dbReference>
<dbReference type="InterPro" id="IPR050099">
    <property type="entry name" value="SIS_GmhA/DiaA_subfam"/>
</dbReference>
<dbReference type="NCBIfam" id="NF008138">
    <property type="entry name" value="PRK10886.1"/>
    <property type="match status" value="1"/>
</dbReference>
<dbReference type="NCBIfam" id="NF010546">
    <property type="entry name" value="PRK13936.1"/>
    <property type="match status" value="1"/>
</dbReference>
<dbReference type="PANTHER" id="PTHR30390:SF6">
    <property type="entry name" value="DNAA INITIATOR-ASSOCIATING PROTEIN DIAA"/>
    <property type="match status" value="1"/>
</dbReference>
<dbReference type="PANTHER" id="PTHR30390">
    <property type="entry name" value="SEDOHEPTULOSE 7-PHOSPHATE ISOMERASE / DNAA INITIATOR-ASSOCIATING FACTOR FOR REPLICATION INITIATION"/>
    <property type="match status" value="1"/>
</dbReference>
<dbReference type="Pfam" id="PF13580">
    <property type="entry name" value="SIS_2"/>
    <property type="match status" value="1"/>
</dbReference>
<dbReference type="SUPFAM" id="SSF53697">
    <property type="entry name" value="SIS domain"/>
    <property type="match status" value="1"/>
</dbReference>
<dbReference type="PROSITE" id="PS51464">
    <property type="entry name" value="SIS"/>
    <property type="match status" value="1"/>
</dbReference>
<organism>
    <name type="scientific">Escherichia coli O81 (strain ED1a)</name>
    <dbReference type="NCBI Taxonomy" id="585397"/>
    <lineage>
        <taxon>Bacteria</taxon>
        <taxon>Pseudomonadati</taxon>
        <taxon>Pseudomonadota</taxon>
        <taxon>Gammaproteobacteria</taxon>
        <taxon>Enterobacterales</taxon>
        <taxon>Enterobacteriaceae</taxon>
        <taxon>Escherichia</taxon>
    </lineage>
</organism>
<name>DIAA_ECO81</name>
<protein>
    <recommendedName>
        <fullName evidence="1">DnaA initiator-associating protein DiaA</fullName>
    </recommendedName>
</protein>